<gene>
    <name evidence="1" type="primary">betA</name>
    <name type="ordered locus">ECP_0386</name>
</gene>
<keyword id="KW-0274">FAD</keyword>
<keyword id="KW-0285">Flavoprotein</keyword>
<keyword id="KW-0520">NAD</keyword>
<keyword id="KW-0560">Oxidoreductase</keyword>
<dbReference type="EC" id="1.1.99.1" evidence="1"/>
<dbReference type="EC" id="1.2.1.8" evidence="1"/>
<dbReference type="EMBL" id="CP000247">
    <property type="protein sequence ID" value="ABG68420.1"/>
    <property type="status" value="ALT_INIT"/>
    <property type="molecule type" value="Genomic_DNA"/>
</dbReference>
<dbReference type="RefSeq" id="WP_001159130.1">
    <property type="nucleotide sequence ID" value="NC_008253.1"/>
</dbReference>
<dbReference type="SMR" id="Q0TKW1"/>
<dbReference type="KEGG" id="ecp:ECP_0386"/>
<dbReference type="HOGENOM" id="CLU_002865_7_1_6"/>
<dbReference type="UniPathway" id="UPA00529">
    <property type="reaction ID" value="UER00385"/>
</dbReference>
<dbReference type="Proteomes" id="UP000009182">
    <property type="component" value="Chromosome"/>
</dbReference>
<dbReference type="GO" id="GO:0016020">
    <property type="term" value="C:membrane"/>
    <property type="evidence" value="ECO:0007669"/>
    <property type="project" value="TreeGrafter"/>
</dbReference>
<dbReference type="GO" id="GO:0008802">
    <property type="term" value="F:betaine-aldehyde dehydrogenase (NAD+) activity"/>
    <property type="evidence" value="ECO:0007669"/>
    <property type="project" value="UniProtKB-EC"/>
</dbReference>
<dbReference type="GO" id="GO:0008812">
    <property type="term" value="F:choline dehydrogenase activity"/>
    <property type="evidence" value="ECO:0007669"/>
    <property type="project" value="UniProtKB-UniRule"/>
</dbReference>
<dbReference type="GO" id="GO:0050660">
    <property type="term" value="F:flavin adenine dinucleotide binding"/>
    <property type="evidence" value="ECO:0007669"/>
    <property type="project" value="InterPro"/>
</dbReference>
<dbReference type="GO" id="GO:0019285">
    <property type="term" value="P:glycine betaine biosynthetic process from choline"/>
    <property type="evidence" value="ECO:0007669"/>
    <property type="project" value="UniProtKB-UniRule"/>
</dbReference>
<dbReference type="Gene3D" id="3.50.50.60">
    <property type="entry name" value="FAD/NAD(P)-binding domain"/>
    <property type="match status" value="1"/>
</dbReference>
<dbReference type="Gene3D" id="3.30.560.10">
    <property type="entry name" value="Glucose Oxidase, domain 3"/>
    <property type="match status" value="1"/>
</dbReference>
<dbReference type="HAMAP" id="MF_00750">
    <property type="entry name" value="Choline_dehydrogen"/>
    <property type="match status" value="1"/>
</dbReference>
<dbReference type="InterPro" id="IPR011533">
    <property type="entry name" value="BetA"/>
</dbReference>
<dbReference type="InterPro" id="IPR036188">
    <property type="entry name" value="FAD/NAD-bd_sf"/>
</dbReference>
<dbReference type="InterPro" id="IPR012132">
    <property type="entry name" value="GMC_OxRdtase"/>
</dbReference>
<dbReference type="InterPro" id="IPR000172">
    <property type="entry name" value="GMC_OxRdtase_N"/>
</dbReference>
<dbReference type="InterPro" id="IPR007867">
    <property type="entry name" value="GMC_OxRtase_C"/>
</dbReference>
<dbReference type="NCBIfam" id="TIGR01810">
    <property type="entry name" value="betA"/>
    <property type="match status" value="1"/>
</dbReference>
<dbReference type="NCBIfam" id="NF002550">
    <property type="entry name" value="PRK02106.1"/>
    <property type="match status" value="1"/>
</dbReference>
<dbReference type="PANTHER" id="PTHR11552:SF147">
    <property type="entry name" value="CHOLINE DEHYDROGENASE, MITOCHONDRIAL"/>
    <property type="match status" value="1"/>
</dbReference>
<dbReference type="PANTHER" id="PTHR11552">
    <property type="entry name" value="GLUCOSE-METHANOL-CHOLINE GMC OXIDOREDUCTASE"/>
    <property type="match status" value="1"/>
</dbReference>
<dbReference type="Pfam" id="PF05199">
    <property type="entry name" value="GMC_oxred_C"/>
    <property type="match status" value="1"/>
</dbReference>
<dbReference type="Pfam" id="PF00732">
    <property type="entry name" value="GMC_oxred_N"/>
    <property type="match status" value="1"/>
</dbReference>
<dbReference type="PIRSF" id="PIRSF000137">
    <property type="entry name" value="Alcohol_oxidase"/>
    <property type="match status" value="1"/>
</dbReference>
<dbReference type="SUPFAM" id="SSF54373">
    <property type="entry name" value="FAD-linked reductases, C-terminal domain"/>
    <property type="match status" value="1"/>
</dbReference>
<dbReference type="SUPFAM" id="SSF51905">
    <property type="entry name" value="FAD/NAD(P)-binding domain"/>
    <property type="match status" value="1"/>
</dbReference>
<dbReference type="PROSITE" id="PS00623">
    <property type="entry name" value="GMC_OXRED_1"/>
    <property type="match status" value="1"/>
</dbReference>
<dbReference type="PROSITE" id="PS00624">
    <property type="entry name" value="GMC_OXRED_2"/>
    <property type="match status" value="1"/>
</dbReference>
<feature type="chain" id="PRO_0000258926" description="Oxygen-dependent choline dehydrogenase">
    <location>
        <begin position="1"/>
        <end position="556"/>
    </location>
</feature>
<feature type="active site" description="Proton acceptor" evidence="1">
    <location>
        <position position="473"/>
    </location>
</feature>
<feature type="binding site" evidence="1">
    <location>
        <begin position="4"/>
        <end position="33"/>
    </location>
    <ligand>
        <name>FAD</name>
        <dbReference type="ChEBI" id="CHEBI:57692"/>
    </ligand>
</feature>
<name>BETA_ECOL5</name>
<sequence>MQFDYIIIGAGSAGNVLATRLTEDPNTTVLLLEAGGPDYRFDFRTQMPAALAFPLQGKRYNWAYETEPEPFMNNRRMECGRGKGLGGSSLINGMCYIRGNALDLDNWAQEPGLENWSYLDCLPYYRKAETRDVGENDYHGGDGPVSVITSKPGVNPLFEAMIEAGMQAGYPRTDDLNGYQQEGFGPMDRTVTPHGRRASTSRGYLDQAKSRPNLTIRTHAMTDHIIFDGKRAVGVEWLEGDSTIPTRAAANKEVLLCAGAIASPQILQRSGVGNAELLAEFDIPLVHELPGVGENLQDHLEMYLQYECKEPVSLYPALQWWNQPRIGAEWLFGGTGVGASNHFEAGGFIRSREEFAWPNIQYHFLPVAINYNGSNAVKEHGFQCHVGSMRSPSRGHVRIKSRDPHQHPGILFNYMSHEQDWQEFRDAIRITREIMHQPALDQYRGREISPGVECQTDEQLDEFVRNHAETAFHPCGTCKMGYDEMAVVDGEGRVHGLEGLRVVDASIMPQIITGNLNATTIMIGEKIADMIRGKEALPRSTAGYFVANGMTVRAKK</sequence>
<accession>Q0TKW1</accession>
<comment type="function">
    <text evidence="1">Involved in the biosynthesis of the osmoprotectant glycine betaine. Catalyzes the oxidation of choline to betaine aldehyde and betaine aldehyde to glycine betaine at the same rate.</text>
</comment>
<comment type="catalytic activity">
    <reaction evidence="1">
        <text>choline + A = betaine aldehyde + AH2</text>
        <dbReference type="Rhea" id="RHEA:17433"/>
        <dbReference type="ChEBI" id="CHEBI:13193"/>
        <dbReference type="ChEBI" id="CHEBI:15354"/>
        <dbReference type="ChEBI" id="CHEBI:15710"/>
        <dbReference type="ChEBI" id="CHEBI:17499"/>
        <dbReference type="EC" id="1.1.99.1"/>
    </reaction>
</comment>
<comment type="catalytic activity">
    <reaction evidence="1">
        <text>betaine aldehyde + NAD(+) + H2O = glycine betaine + NADH + 2 H(+)</text>
        <dbReference type="Rhea" id="RHEA:15305"/>
        <dbReference type="ChEBI" id="CHEBI:15377"/>
        <dbReference type="ChEBI" id="CHEBI:15378"/>
        <dbReference type="ChEBI" id="CHEBI:15710"/>
        <dbReference type="ChEBI" id="CHEBI:17750"/>
        <dbReference type="ChEBI" id="CHEBI:57540"/>
        <dbReference type="ChEBI" id="CHEBI:57945"/>
        <dbReference type="EC" id="1.2.1.8"/>
    </reaction>
</comment>
<comment type="cofactor">
    <cofactor evidence="1">
        <name>FAD</name>
        <dbReference type="ChEBI" id="CHEBI:57692"/>
    </cofactor>
</comment>
<comment type="pathway">
    <text evidence="1">Amine and polyamine biosynthesis; betaine biosynthesis via choline pathway; betaine aldehyde from choline (cytochrome c reductase route): step 1/1.</text>
</comment>
<comment type="similarity">
    <text evidence="1">Belongs to the GMC oxidoreductase family.</text>
</comment>
<comment type="sequence caution" evidence="2">
    <conflict type="erroneous initiation">
        <sequence resource="EMBL-CDS" id="ABG68420"/>
    </conflict>
    <text>Extended N-terminus.</text>
</comment>
<evidence type="ECO:0000255" key="1">
    <source>
        <dbReference type="HAMAP-Rule" id="MF_00750"/>
    </source>
</evidence>
<evidence type="ECO:0000305" key="2"/>
<organism>
    <name type="scientific">Escherichia coli O6:K15:H31 (strain 536 / UPEC)</name>
    <dbReference type="NCBI Taxonomy" id="362663"/>
    <lineage>
        <taxon>Bacteria</taxon>
        <taxon>Pseudomonadati</taxon>
        <taxon>Pseudomonadota</taxon>
        <taxon>Gammaproteobacteria</taxon>
        <taxon>Enterobacterales</taxon>
        <taxon>Enterobacteriaceae</taxon>
        <taxon>Escherichia</taxon>
    </lineage>
</organism>
<protein>
    <recommendedName>
        <fullName evidence="1">Oxygen-dependent choline dehydrogenase</fullName>
        <shortName evidence="1">CDH</shortName>
        <shortName evidence="1">CHD</shortName>
        <ecNumber evidence="1">1.1.99.1</ecNumber>
    </recommendedName>
    <alternativeName>
        <fullName evidence="1">Betaine aldehyde dehydrogenase</fullName>
        <shortName evidence="1">BADH</shortName>
        <ecNumber evidence="1">1.2.1.8</ecNumber>
    </alternativeName>
</protein>
<reference key="1">
    <citation type="journal article" date="2006" name="Mol. Microbiol.">
        <title>Role of pathogenicity island-associated integrases in the genome plasticity of uropathogenic Escherichia coli strain 536.</title>
        <authorList>
            <person name="Hochhut B."/>
            <person name="Wilde C."/>
            <person name="Balling G."/>
            <person name="Middendorf B."/>
            <person name="Dobrindt U."/>
            <person name="Brzuszkiewicz E."/>
            <person name="Gottschalk G."/>
            <person name="Carniel E."/>
            <person name="Hacker J."/>
        </authorList>
    </citation>
    <scope>NUCLEOTIDE SEQUENCE [LARGE SCALE GENOMIC DNA]</scope>
    <source>
        <strain>536 / UPEC</strain>
    </source>
</reference>
<proteinExistence type="inferred from homology"/>